<proteinExistence type="evidence at protein level"/>
<reference key="1">
    <citation type="journal article" date="2010" name="Stand. Genomic Sci.">
        <title>Complete genome sequence of Haloterrigena turkmenica type strain (4k).</title>
        <authorList>
            <person name="Saunders E."/>
            <person name="Tindall B.J."/>
            <person name="Fahnrich R."/>
            <person name="Lapidus A."/>
            <person name="Copeland A."/>
            <person name="Del Rio T.G."/>
            <person name="Lucas S."/>
            <person name="Chen F."/>
            <person name="Tice H."/>
            <person name="Cheng J.F."/>
            <person name="Han C."/>
            <person name="Detter J.C."/>
            <person name="Bruce D."/>
            <person name="Goodwin L."/>
            <person name="Chain P."/>
            <person name="Pitluck S."/>
            <person name="Pati A."/>
            <person name="Ivanova N."/>
            <person name="Mavromatis K."/>
            <person name="Chen A."/>
            <person name="Palaniappan K."/>
            <person name="Land M."/>
            <person name="Hauser L."/>
            <person name="Chang Y.J."/>
            <person name="Jeffries C.D."/>
            <person name="Brettin T."/>
            <person name="Rohde M."/>
            <person name="Goker M."/>
            <person name="Bristow J."/>
            <person name="Eisen J.A."/>
            <person name="Markowitz V."/>
            <person name="Hugenholtz P."/>
            <person name="Klenk H.P."/>
            <person name="Kyrpides N.C."/>
        </authorList>
    </citation>
    <scope>NUCLEOTIDE SEQUENCE [LARGE SCALE GENOMIC DNA]</scope>
    <source>
        <strain>ATCC 51198 / DSM 5511 / JCM 9101 / NCIMB 13204 / VKM B-1734 / 4k</strain>
    </source>
</reference>
<reference key="2">
    <citation type="journal article" date="2022" name="Commun. Biol.">
        <title>A non-carboxylating pentose bisphosphate pathway in halophilic archaea.</title>
        <authorList>
            <person name="Sato T."/>
            <person name="Utashima S.H."/>
            <person name="Yoshii Y."/>
            <person name="Hirata K."/>
            <person name="Kanda S."/>
            <person name="Onoda Y."/>
            <person name="Jin J.Q."/>
            <person name="Xiao S."/>
            <person name="Minami R."/>
            <person name="Fukushima H."/>
            <person name="Noguchi A."/>
            <person name="Manabe Y."/>
            <person name="Fukase K."/>
            <person name="Atomi H."/>
        </authorList>
    </citation>
    <scope>FUNCTION</scope>
    <scope>CATALYTIC ACTIVITY</scope>
</reference>
<gene>
    <name evidence="4" type="ordered locus">Htur_0571</name>
</gene>
<dbReference type="EC" id="5.3.1.29" evidence="1 2"/>
<dbReference type="EMBL" id="CP001860">
    <property type="protein sequence ID" value="ADB59469.1"/>
    <property type="molecule type" value="Genomic_DNA"/>
</dbReference>
<dbReference type="RefSeq" id="WP_012941790.1">
    <property type="nucleotide sequence ID" value="NC_013743.1"/>
</dbReference>
<dbReference type="SMR" id="D2RW80"/>
<dbReference type="STRING" id="543526.Htur_0571"/>
<dbReference type="GeneID" id="8741153"/>
<dbReference type="KEGG" id="htu:Htur_0571"/>
<dbReference type="eggNOG" id="arCOG01124">
    <property type="taxonomic scope" value="Archaea"/>
</dbReference>
<dbReference type="HOGENOM" id="CLU_016218_2_1_2"/>
<dbReference type="OrthoDB" id="27639at2157"/>
<dbReference type="BioCyc" id="MetaCyc:MONOMER-124397"/>
<dbReference type="Proteomes" id="UP000001903">
    <property type="component" value="Chromosome"/>
</dbReference>
<dbReference type="GO" id="GO:0043917">
    <property type="term" value="F:ribose 1,5-bisphosphate isomerase activity"/>
    <property type="evidence" value="ECO:0007669"/>
    <property type="project" value="UniProtKB-UniRule"/>
</dbReference>
<dbReference type="GO" id="GO:0046523">
    <property type="term" value="F:S-methyl-5-thioribose-1-phosphate isomerase activity"/>
    <property type="evidence" value="ECO:0007669"/>
    <property type="project" value="TreeGrafter"/>
</dbReference>
<dbReference type="GO" id="GO:0019509">
    <property type="term" value="P:L-methionine salvage from methylthioadenosine"/>
    <property type="evidence" value="ECO:0007669"/>
    <property type="project" value="TreeGrafter"/>
</dbReference>
<dbReference type="GO" id="GO:0019323">
    <property type="term" value="P:pentose catabolic process"/>
    <property type="evidence" value="ECO:0007669"/>
    <property type="project" value="UniProtKB-UniRule"/>
</dbReference>
<dbReference type="FunFam" id="1.20.120.420:FF:000011">
    <property type="entry name" value="Ribose 1,5-bisphosphate isomerase"/>
    <property type="match status" value="1"/>
</dbReference>
<dbReference type="FunFam" id="3.40.50.10470:FF:000019">
    <property type="entry name" value="Ribose 1,5-bisphosphate isomerase"/>
    <property type="match status" value="1"/>
</dbReference>
<dbReference type="Gene3D" id="1.20.120.420">
    <property type="entry name" value="translation initiation factor eif-2b, domain 1"/>
    <property type="match status" value="1"/>
</dbReference>
<dbReference type="Gene3D" id="3.40.50.10470">
    <property type="entry name" value="Translation initiation factor eif-2b, domain 2"/>
    <property type="match status" value="1"/>
</dbReference>
<dbReference type="HAMAP" id="MF_02230">
    <property type="entry name" value="R15P_isomerase"/>
    <property type="match status" value="1"/>
</dbReference>
<dbReference type="InterPro" id="IPR000649">
    <property type="entry name" value="IF-2B-related"/>
</dbReference>
<dbReference type="InterPro" id="IPR042529">
    <property type="entry name" value="IF_2B-like_C"/>
</dbReference>
<dbReference type="InterPro" id="IPR011559">
    <property type="entry name" value="Initiation_fac_2B_a/b/d"/>
</dbReference>
<dbReference type="InterPro" id="IPR027363">
    <property type="entry name" value="M1Pi_N"/>
</dbReference>
<dbReference type="InterPro" id="IPR037171">
    <property type="entry name" value="NagB/RpiA_transferase-like"/>
</dbReference>
<dbReference type="InterPro" id="IPR005250">
    <property type="entry name" value="R15Pi"/>
</dbReference>
<dbReference type="NCBIfam" id="TIGR00524">
    <property type="entry name" value="eIF-2B_rel"/>
    <property type="match status" value="1"/>
</dbReference>
<dbReference type="NCBIfam" id="TIGR00511">
    <property type="entry name" value="ribulose_e2b2"/>
    <property type="match status" value="1"/>
</dbReference>
<dbReference type="PANTHER" id="PTHR43475">
    <property type="entry name" value="METHYLTHIORIBOSE-1-PHOSPHATE ISOMERASE"/>
    <property type="match status" value="1"/>
</dbReference>
<dbReference type="PANTHER" id="PTHR43475:SF2">
    <property type="entry name" value="RIBOSE 1,5-BISPHOSPHATE ISOMERASE"/>
    <property type="match status" value="1"/>
</dbReference>
<dbReference type="Pfam" id="PF01008">
    <property type="entry name" value="IF-2B"/>
    <property type="match status" value="1"/>
</dbReference>
<dbReference type="SUPFAM" id="SSF100950">
    <property type="entry name" value="NagB/RpiA/CoA transferase-like"/>
    <property type="match status" value="1"/>
</dbReference>
<sequence length="327" mass="35206">MDDRGPDVAPAVVTTADEIAAMEIRGAATIADAAAEALAIQAERSDAERPDAFERQLRAAAKTLYETRPTAVSLPNALRYVLAGMDGETVAELRASTIARAEEFQRDLAQAQSKLGSVGANRLRDGDVVMTHCHSTDALACLEAAVEDGTEIEAIVKETRPRLQGHITARQLREWDVPVTVIVDGAARRYLDQADHVLVGADSIAADGSVINKIGTSGLAVIARERGVPVTVAAQTIKLHPDTMTGHTVEIERRDEREVLDDDERAAITDTADGADDGLTVENPAFDVTPPRYVDAIVTEHGQFPPETVVTLMRELFGETVDEPWEL</sequence>
<organism>
    <name type="scientific">Haloterrigena turkmenica (strain ATCC 51198 / DSM 5511 / JCM 9101 / NCIMB 13204 / VKM B-1734 / 4k)</name>
    <name type="common">Halococcus turkmenicus</name>
    <dbReference type="NCBI Taxonomy" id="543526"/>
    <lineage>
        <taxon>Archaea</taxon>
        <taxon>Methanobacteriati</taxon>
        <taxon>Methanobacteriota</taxon>
        <taxon>Stenosarchaea group</taxon>
        <taxon>Halobacteria</taxon>
        <taxon>Halobacteriales</taxon>
        <taxon>Natrialbaceae</taxon>
        <taxon>Haloterrigena</taxon>
    </lineage>
</organism>
<evidence type="ECO:0000255" key="1">
    <source>
        <dbReference type="HAMAP-Rule" id="MF_02230"/>
    </source>
</evidence>
<evidence type="ECO:0000269" key="2">
    <source>
    </source>
</evidence>
<evidence type="ECO:0000303" key="3">
    <source>
    </source>
</evidence>
<evidence type="ECO:0000312" key="4">
    <source>
        <dbReference type="EMBL" id="ADB59469.1"/>
    </source>
</evidence>
<keyword id="KW-0119">Carbohydrate metabolism</keyword>
<keyword id="KW-0413">Isomerase</keyword>
<comment type="function">
    <text evidence="2">Isomerase involved in the non-carboxylating pentose bisphosphate pathway, a nucleoside degradation pathway present in some halophilic archaea (PubMed:36434094). Catalyzes the isomerization of ribose 1,5-bisphosphate (R15P) to ribulose 1,5-bisphosphate (RuBP) (PubMed:36434094).</text>
</comment>
<comment type="catalytic activity">
    <reaction evidence="1 2">
        <text>alpha-D-ribose 1,5-bisphosphate = D-ribulose 1,5-bisphosphate</text>
        <dbReference type="Rhea" id="RHEA:32243"/>
        <dbReference type="ChEBI" id="CHEBI:57870"/>
        <dbReference type="ChEBI" id="CHEBI:68688"/>
        <dbReference type="EC" id="5.3.1.29"/>
    </reaction>
    <physiologicalReaction direction="left-to-right" evidence="2">
        <dbReference type="Rhea" id="RHEA:32244"/>
    </physiologicalReaction>
</comment>
<comment type="miscellaneous">
    <text evidence="1">Reaction proceeds via a cis-phosphoenolate intermediate.</text>
</comment>
<comment type="similarity">
    <text evidence="1">Belongs to the eIF-2B alpha/beta/delta subunits family. R15P isomerase subfamily.</text>
</comment>
<name>R15PI_HALTV</name>
<accession>D2RW80</accession>
<protein>
    <recommendedName>
        <fullName evidence="1">Ribose 1,5-bisphosphate isomerase</fullName>
        <shortName evidence="1 3">R15P isomerase</shortName>
        <shortName evidence="1">R15Pi</shortName>
        <ecNumber evidence="1 2">5.3.1.29</ecNumber>
    </recommendedName>
    <alternativeName>
        <fullName evidence="1">Ribulose 1,5-bisphosphate synthase</fullName>
        <shortName evidence="1">RuBP synthase</shortName>
    </alternativeName>
</protein>
<feature type="chain" id="PRO_0000459714" description="Ribose 1,5-bisphosphate isomerase">
    <location>
        <begin position="1"/>
        <end position="327"/>
    </location>
</feature>
<feature type="active site" description="Proton acceptor" evidence="1">
    <location>
        <position position="133"/>
    </location>
</feature>
<feature type="active site" description="Proton donor" evidence="1">
    <location>
        <position position="202"/>
    </location>
</feature>
<feature type="binding site" evidence="1">
    <location>
        <begin position="25"/>
        <end position="28"/>
    </location>
    <ligand>
        <name>substrate</name>
    </ligand>
</feature>
<feature type="binding site" evidence="1">
    <location>
        <position position="68"/>
    </location>
    <ligand>
        <name>substrate</name>
    </ligand>
</feature>
<feature type="binding site" evidence="1">
    <location>
        <begin position="212"/>
        <end position="213"/>
    </location>
    <ligand>
        <name>substrate</name>
    </ligand>
</feature>
<feature type="binding site" evidence="1">
    <location>
        <position position="238"/>
    </location>
    <ligand>
        <name>substrate</name>
    </ligand>
</feature>